<sequence>MPIATINPATGETVKTFTAATDDEVDAAIARAHRRFADYRQTSFAQRARWANATADLLEAEADQAAAMMTLEMGKTLAAAKAEALKCAKGFRYYAENAEALLADEPADAAKVGASAAYGRYQPLGVILAVMPWNFPLWQAVRFAAPALMAGNVGLLKHASNVPQCALYLADVIARGGFPDGCFQTLLVSSGAVEAILRDPRVAAATLTGSEPAGQSVGAIAGNEIKPTVLELGGSDPFIVMPSADLDAAVSTAVTGRVQNNGQSCIAAKRFIVHADIYDDFVDKFVARMAALRVGDPTDPDTDVGPLATEQGRNEVAKQVEDAAAAGAVIRCGGKRLDRPGWFYPPTVITDISKDMALYTEEVFGPVASVFRAANIDEAVEIANATTFGLGSNAWTRDETEQRRFIDDIVAGQVFINGMTVSYPELPFGGVKRSGYGRELSAHGIREFCNIKTVWIA</sequence>
<proteinExistence type="inferred from homology"/>
<gene>
    <name type="primary">gabD1</name>
    <name type="ordered locus">BCG_0271c</name>
</gene>
<reference key="1">
    <citation type="journal article" date="2007" name="Proc. Natl. Acad. Sci. U.S.A.">
        <title>Genome plasticity of BCG and impact on vaccine efficacy.</title>
        <authorList>
            <person name="Brosch R."/>
            <person name="Gordon S.V."/>
            <person name="Garnier T."/>
            <person name="Eiglmeier K."/>
            <person name="Frigui W."/>
            <person name="Valenti P."/>
            <person name="Dos Santos S."/>
            <person name="Duthoy S."/>
            <person name="Lacroix C."/>
            <person name="Garcia-Pelayo C."/>
            <person name="Inwald J.K."/>
            <person name="Golby P."/>
            <person name="Garcia J.N."/>
            <person name="Hewinson R.G."/>
            <person name="Behr M.A."/>
            <person name="Quail M.A."/>
            <person name="Churcher C."/>
            <person name="Barrell B.G."/>
            <person name="Parkhill J."/>
            <person name="Cole S.T."/>
        </authorList>
    </citation>
    <scope>NUCLEOTIDE SEQUENCE [LARGE SCALE GENOMIC DNA]</scope>
    <source>
        <strain>BCG / Pasteur 1173P2</strain>
    </source>
</reference>
<comment type="function">
    <text evidence="1">Catalyzes the NADP(+)-dependent oxidation of succinate semialdehyde to succinate. It is believed to be the main source of succinate semialdehyde dehydrogenase activity in Mycobacterium (By similarity).</text>
</comment>
<comment type="catalytic activity">
    <reaction>
        <text>succinate semialdehyde + NADP(+) + H2O = succinate + NADPH + 2 H(+)</text>
        <dbReference type="Rhea" id="RHEA:13213"/>
        <dbReference type="ChEBI" id="CHEBI:15377"/>
        <dbReference type="ChEBI" id="CHEBI:15378"/>
        <dbReference type="ChEBI" id="CHEBI:30031"/>
        <dbReference type="ChEBI" id="CHEBI:57706"/>
        <dbReference type="ChEBI" id="CHEBI:57783"/>
        <dbReference type="ChEBI" id="CHEBI:58349"/>
        <dbReference type="EC" id="1.2.1.79"/>
    </reaction>
</comment>
<comment type="similarity">
    <text evidence="3">Belongs to the aldehyde dehydrogenase family.</text>
</comment>
<comment type="sequence caution" evidence="3">
    <conflict type="erroneous initiation">
        <sequence resource="EMBL-CDS" id="CAL70255"/>
    </conflict>
</comment>
<dbReference type="EC" id="1.2.1.79"/>
<dbReference type="EMBL" id="AM408590">
    <property type="protein sequence ID" value="CAL70255.1"/>
    <property type="status" value="ALT_INIT"/>
    <property type="molecule type" value="Genomic_DNA"/>
</dbReference>
<dbReference type="RefSeq" id="WP_003912534.1">
    <property type="nucleotide sequence ID" value="NC_008769.1"/>
</dbReference>
<dbReference type="SMR" id="A1KF54"/>
<dbReference type="KEGG" id="mbb:BCG_0271c"/>
<dbReference type="HOGENOM" id="CLU_005391_1_0_11"/>
<dbReference type="Proteomes" id="UP000001472">
    <property type="component" value="Chromosome"/>
</dbReference>
<dbReference type="GO" id="GO:0004030">
    <property type="term" value="F:aldehyde dehydrogenase [NAD(P)+] activity"/>
    <property type="evidence" value="ECO:0007669"/>
    <property type="project" value="InterPro"/>
</dbReference>
<dbReference type="GO" id="GO:0004777">
    <property type="term" value="F:succinate-semialdehyde dehydrogenase (NAD+) activity"/>
    <property type="evidence" value="ECO:0007669"/>
    <property type="project" value="TreeGrafter"/>
</dbReference>
<dbReference type="GO" id="GO:0036243">
    <property type="term" value="F:succinate-semialdehyde dehydrogenase (NADP+) activity"/>
    <property type="evidence" value="ECO:0007669"/>
    <property type="project" value="UniProtKB-EC"/>
</dbReference>
<dbReference type="GO" id="GO:0006099">
    <property type="term" value="P:tricarboxylic acid cycle"/>
    <property type="evidence" value="ECO:0007669"/>
    <property type="project" value="UniProtKB-KW"/>
</dbReference>
<dbReference type="CDD" id="cd07100">
    <property type="entry name" value="ALDH_SSADH1_GabD1"/>
    <property type="match status" value="1"/>
</dbReference>
<dbReference type="FunFam" id="3.40.309.10:FF:000010">
    <property type="entry name" value="Gamma-aminobutyraldehyde dehydrogenase"/>
    <property type="match status" value="1"/>
</dbReference>
<dbReference type="FunFam" id="3.40.605.10:FF:000012">
    <property type="entry name" value="NAD-dependent succinate-semialdehyde dehydrogenase"/>
    <property type="match status" value="1"/>
</dbReference>
<dbReference type="Gene3D" id="3.40.605.10">
    <property type="entry name" value="Aldehyde Dehydrogenase, Chain A, domain 1"/>
    <property type="match status" value="1"/>
</dbReference>
<dbReference type="Gene3D" id="3.40.309.10">
    <property type="entry name" value="Aldehyde Dehydrogenase, Chain A, domain 2"/>
    <property type="match status" value="1"/>
</dbReference>
<dbReference type="InterPro" id="IPR016161">
    <property type="entry name" value="Ald_DH/histidinol_DH"/>
</dbReference>
<dbReference type="InterPro" id="IPR016163">
    <property type="entry name" value="Ald_DH_C"/>
</dbReference>
<dbReference type="InterPro" id="IPR016160">
    <property type="entry name" value="Ald_DH_CS_CYS"/>
</dbReference>
<dbReference type="InterPro" id="IPR016162">
    <property type="entry name" value="Ald_DH_N"/>
</dbReference>
<dbReference type="InterPro" id="IPR015590">
    <property type="entry name" value="Aldehyde_DH_dom"/>
</dbReference>
<dbReference type="InterPro" id="IPR044148">
    <property type="entry name" value="ALDH_GabD1-like"/>
</dbReference>
<dbReference type="InterPro" id="IPR047110">
    <property type="entry name" value="GABD/Sad-like"/>
</dbReference>
<dbReference type="NCBIfam" id="NF006915">
    <property type="entry name" value="PRK09406.1"/>
    <property type="match status" value="1"/>
</dbReference>
<dbReference type="PANTHER" id="PTHR43217">
    <property type="entry name" value="SUCCINATE SEMIALDEHYDE DEHYDROGENASE [NAD(P)+] SAD"/>
    <property type="match status" value="1"/>
</dbReference>
<dbReference type="PANTHER" id="PTHR43217:SF1">
    <property type="entry name" value="SUCCINATE SEMIALDEHYDE DEHYDROGENASE [NAD(P)+] SAD"/>
    <property type="match status" value="1"/>
</dbReference>
<dbReference type="Pfam" id="PF00171">
    <property type="entry name" value="Aldedh"/>
    <property type="match status" value="1"/>
</dbReference>
<dbReference type="SUPFAM" id="SSF53720">
    <property type="entry name" value="ALDH-like"/>
    <property type="match status" value="1"/>
</dbReference>
<dbReference type="PROSITE" id="PS00070">
    <property type="entry name" value="ALDEHYDE_DEHYDR_CYS"/>
    <property type="match status" value="1"/>
</dbReference>
<accession>A1KF54</accession>
<name>GABD1_MYCBP</name>
<keyword id="KW-0521">NADP</keyword>
<keyword id="KW-0560">Oxidoreductase</keyword>
<keyword id="KW-0816">Tricarboxylic acid cycle</keyword>
<feature type="chain" id="PRO_0000310702" description="Succinate-semialdehyde dehydrogenase [NADP(+)] 1">
    <location>
        <begin position="1"/>
        <end position="457"/>
    </location>
</feature>
<feature type="active site" description="Proton acceptor" evidence="2">
    <location>
        <position position="231"/>
    </location>
</feature>
<feature type="active site" description="Nucleophile" evidence="2">
    <location>
        <position position="265"/>
    </location>
</feature>
<feature type="binding site" evidence="1">
    <location>
        <begin position="133"/>
        <end position="134"/>
    </location>
    <ligand>
        <name>NADP(+)</name>
        <dbReference type="ChEBI" id="CHEBI:58349"/>
    </ligand>
</feature>
<feature type="binding site" evidence="1">
    <location>
        <begin position="157"/>
        <end position="160"/>
    </location>
    <ligand>
        <name>NADP(+)</name>
        <dbReference type="ChEBI" id="CHEBI:58349"/>
    </ligand>
</feature>
<feature type="binding site" evidence="1">
    <location>
        <begin position="209"/>
        <end position="210"/>
    </location>
    <ligand>
        <name>NADP(+)</name>
        <dbReference type="ChEBI" id="CHEBI:58349"/>
    </ligand>
</feature>
<feature type="binding site" evidence="1">
    <location>
        <position position="232"/>
    </location>
    <ligand>
        <name>NADP(+)</name>
        <dbReference type="ChEBI" id="CHEBI:58349"/>
    </ligand>
</feature>
<feature type="binding site" evidence="1">
    <location>
        <position position="362"/>
    </location>
    <ligand>
        <name>NADP(+)</name>
        <dbReference type="ChEBI" id="CHEBI:58349"/>
    </ligand>
</feature>
<protein>
    <recommendedName>
        <fullName>Succinate-semialdehyde dehydrogenase [NADP(+)] 1</fullName>
        <shortName>SSADH 1</shortName>
        <shortName>SSDH 1</shortName>
        <ecNumber>1.2.1.79</ecNumber>
    </recommendedName>
</protein>
<evidence type="ECO:0000250" key="1"/>
<evidence type="ECO:0000255" key="2">
    <source>
        <dbReference type="PROSITE-ProRule" id="PRU10008"/>
    </source>
</evidence>
<evidence type="ECO:0000305" key="3"/>
<organism>
    <name type="scientific">Mycobacterium bovis (strain BCG / Pasteur 1173P2)</name>
    <dbReference type="NCBI Taxonomy" id="410289"/>
    <lineage>
        <taxon>Bacteria</taxon>
        <taxon>Bacillati</taxon>
        <taxon>Actinomycetota</taxon>
        <taxon>Actinomycetes</taxon>
        <taxon>Mycobacteriales</taxon>
        <taxon>Mycobacteriaceae</taxon>
        <taxon>Mycobacterium</taxon>
        <taxon>Mycobacterium tuberculosis complex</taxon>
    </lineage>
</organism>